<name>MSRA_AZOC5</name>
<keyword id="KW-0560">Oxidoreductase</keyword>
<keyword id="KW-1185">Reference proteome</keyword>
<proteinExistence type="inferred from homology"/>
<sequence length="218" mass="23510">MFWSKKPLDLPTPETALKGRPDAIPTARLHHVNQNPLKGPYPDGFRTAIFALGCFWGAERAFWRTPGVWVTAVGYLAGLTPNPTYEEVCSGRTGHTEGVLVVYDPAVISYADLVKLFFESHDPTQGMRQGNDVGTQYRSGIYTSDPQEKAVAEAVKASYEAALKAKGFGPITTEIIDGGPFYFAEDYHQQYLSKNPGGYCGLGGTGVSCPIGVGVAAQ</sequence>
<reference key="1">
    <citation type="submission" date="2007-04" db="EMBL/GenBank/DDBJ databases">
        <title>Complete genome sequence of the nitrogen-fixing bacterium Azorhizobium caulinodans ORS571.</title>
        <authorList>
            <person name="Lee K.B."/>
            <person name="Backer P.D."/>
            <person name="Aono T."/>
            <person name="Liu C.T."/>
            <person name="Suzuki S."/>
            <person name="Suzuki T."/>
            <person name="Kaneko T."/>
            <person name="Yamada M."/>
            <person name="Tabata S."/>
            <person name="Kupfer D.M."/>
            <person name="Najar F.Z."/>
            <person name="Wiley G.B."/>
            <person name="Roe B."/>
            <person name="Binnewies T."/>
            <person name="Ussery D."/>
            <person name="Vereecke D."/>
            <person name="Gevers D."/>
            <person name="Holsters M."/>
            <person name="Oyaizu H."/>
        </authorList>
    </citation>
    <scope>NUCLEOTIDE SEQUENCE [LARGE SCALE GENOMIC DNA]</scope>
    <source>
        <strain>ATCC 43989 / DSM 5975 / JCM 20966 / LMG 6465 / NBRC 14845 / NCIMB 13405 / ORS 571</strain>
    </source>
</reference>
<feature type="chain" id="PRO_1000073498" description="Peptide methionine sulfoxide reductase MsrA">
    <location>
        <begin position="1"/>
        <end position="218"/>
    </location>
</feature>
<feature type="active site" evidence="1">
    <location>
        <position position="54"/>
    </location>
</feature>
<organism>
    <name type="scientific">Azorhizobium caulinodans (strain ATCC 43989 / DSM 5975 / JCM 20966 / LMG 6465 / NBRC 14845 / NCIMB 13405 / ORS 571)</name>
    <dbReference type="NCBI Taxonomy" id="438753"/>
    <lineage>
        <taxon>Bacteria</taxon>
        <taxon>Pseudomonadati</taxon>
        <taxon>Pseudomonadota</taxon>
        <taxon>Alphaproteobacteria</taxon>
        <taxon>Hyphomicrobiales</taxon>
        <taxon>Xanthobacteraceae</taxon>
        <taxon>Azorhizobium</taxon>
    </lineage>
</organism>
<accession>A8IPQ8</accession>
<evidence type="ECO:0000255" key="1">
    <source>
        <dbReference type="HAMAP-Rule" id="MF_01401"/>
    </source>
</evidence>
<comment type="function">
    <text evidence="1">Has an important function as a repair enzyme for proteins that have been inactivated by oxidation. Catalyzes the reversible oxidation-reduction of methionine sulfoxide in proteins to methionine.</text>
</comment>
<comment type="catalytic activity">
    <reaction evidence="1">
        <text>L-methionyl-[protein] + [thioredoxin]-disulfide + H2O = L-methionyl-(S)-S-oxide-[protein] + [thioredoxin]-dithiol</text>
        <dbReference type="Rhea" id="RHEA:14217"/>
        <dbReference type="Rhea" id="RHEA-COMP:10698"/>
        <dbReference type="Rhea" id="RHEA-COMP:10700"/>
        <dbReference type="Rhea" id="RHEA-COMP:12313"/>
        <dbReference type="Rhea" id="RHEA-COMP:12315"/>
        <dbReference type="ChEBI" id="CHEBI:15377"/>
        <dbReference type="ChEBI" id="CHEBI:16044"/>
        <dbReference type="ChEBI" id="CHEBI:29950"/>
        <dbReference type="ChEBI" id="CHEBI:44120"/>
        <dbReference type="ChEBI" id="CHEBI:50058"/>
        <dbReference type="EC" id="1.8.4.11"/>
    </reaction>
</comment>
<comment type="catalytic activity">
    <reaction evidence="1">
        <text>[thioredoxin]-disulfide + L-methionine + H2O = L-methionine (S)-S-oxide + [thioredoxin]-dithiol</text>
        <dbReference type="Rhea" id="RHEA:19993"/>
        <dbReference type="Rhea" id="RHEA-COMP:10698"/>
        <dbReference type="Rhea" id="RHEA-COMP:10700"/>
        <dbReference type="ChEBI" id="CHEBI:15377"/>
        <dbReference type="ChEBI" id="CHEBI:29950"/>
        <dbReference type="ChEBI" id="CHEBI:50058"/>
        <dbReference type="ChEBI" id="CHEBI:57844"/>
        <dbReference type="ChEBI" id="CHEBI:58772"/>
        <dbReference type="EC" id="1.8.4.11"/>
    </reaction>
</comment>
<comment type="similarity">
    <text evidence="1">Belongs to the MsrA Met sulfoxide reductase family.</text>
</comment>
<protein>
    <recommendedName>
        <fullName evidence="1">Peptide methionine sulfoxide reductase MsrA</fullName>
        <shortName evidence="1">Protein-methionine-S-oxide reductase</shortName>
        <ecNumber evidence="1">1.8.4.11</ecNumber>
    </recommendedName>
    <alternativeName>
        <fullName evidence="1">Peptide-methionine (S)-S-oxide reductase</fullName>
        <shortName evidence="1">Peptide Met(O) reductase</shortName>
    </alternativeName>
</protein>
<gene>
    <name evidence="1" type="primary">msrA</name>
    <name type="ordered locus">AZC_0674</name>
</gene>
<dbReference type="EC" id="1.8.4.11" evidence="1"/>
<dbReference type="EMBL" id="AP009384">
    <property type="protein sequence ID" value="BAF86672.1"/>
    <property type="molecule type" value="Genomic_DNA"/>
</dbReference>
<dbReference type="RefSeq" id="WP_012169205.1">
    <property type="nucleotide sequence ID" value="NC_009937.1"/>
</dbReference>
<dbReference type="SMR" id="A8IPQ8"/>
<dbReference type="STRING" id="438753.AZC_0674"/>
<dbReference type="KEGG" id="azc:AZC_0674"/>
<dbReference type="eggNOG" id="COG0225">
    <property type="taxonomic scope" value="Bacteria"/>
</dbReference>
<dbReference type="HOGENOM" id="CLU_031040_10_3_5"/>
<dbReference type="Proteomes" id="UP000000270">
    <property type="component" value="Chromosome"/>
</dbReference>
<dbReference type="GO" id="GO:0005737">
    <property type="term" value="C:cytoplasm"/>
    <property type="evidence" value="ECO:0007669"/>
    <property type="project" value="TreeGrafter"/>
</dbReference>
<dbReference type="GO" id="GO:0036456">
    <property type="term" value="F:L-methionine-(S)-S-oxide reductase activity"/>
    <property type="evidence" value="ECO:0007669"/>
    <property type="project" value="TreeGrafter"/>
</dbReference>
<dbReference type="GO" id="GO:0008113">
    <property type="term" value="F:peptide-methionine (S)-S-oxide reductase activity"/>
    <property type="evidence" value="ECO:0007669"/>
    <property type="project" value="UniProtKB-UniRule"/>
</dbReference>
<dbReference type="GO" id="GO:0034599">
    <property type="term" value="P:cellular response to oxidative stress"/>
    <property type="evidence" value="ECO:0007669"/>
    <property type="project" value="TreeGrafter"/>
</dbReference>
<dbReference type="GO" id="GO:0036211">
    <property type="term" value="P:protein modification process"/>
    <property type="evidence" value="ECO:0007669"/>
    <property type="project" value="UniProtKB-UniRule"/>
</dbReference>
<dbReference type="FunFam" id="3.30.1060.10:FF:000001">
    <property type="entry name" value="Peptide methionine sulfoxide reductase MsrA"/>
    <property type="match status" value="1"/>
</dbReference>
<dbReference type="Gene3D" id="3.30.1060.10">
    <property type="entry name" value="Peptide methionine sulphoxide reductase MsrA"/>
    <property type="match status" value="1"/>
</dbReference>
<dbReference type="HAMAP" id="MF_01401">
    <property type="entry name" value="MsrA"/>
    <property type="match status" value="1"/>
</dbReference>
<dbReference type="InterPro" id="IPR002569">
    <property type="entry name" value="Met_Sox_Rdtase_MsrA_dom"/>
</dbReference>
<dbReference type="InterPro" id="IPR036509">
    <property type="entry name" value="Met_Sox_Rdtase_MsrA_sf"/>
</dbReference>
<dbReference type="InterPro" id="IPR050162">
    <property type="entry name" value="MsrA_MetSO_reductase"/>
</dbReference>
<dbReference type="NCBIfam" id="TIGR00401">
    <property type="entry name" value="msrA"/>
    <property type="match status" value="1"/>
</dbReference>
<dbReference type="PANTHER" id="PTHR42799">
    <property type="entry name" value="MITOCHONDRIAL PEPTIDE METHIONINE SULFOXIDE REDUCTASE"/>
    <property type="match status" value="1"/>
</dbReference>
<dbReference type="PANTHER" id="PTHR42799:SF2">
    <property type="entry name" value="MITOCHONDRIAL PEPTIDE METHIONINE SULFOXIDE REDUCTASE"/>
    <property type="match status" value="1"/>
</dbReference>
<dbReference type="Pfam" id="PF01625">
    <property type="entry name" value="PMSR"/>
    <property type="match status" value="1"/>
</dbReference>
<dbReference type="SUPFAM" id="SSF55068">
    <property type="entry name" value="Peptide methionine sulfoxide reductase"/>
    <property type="match status" value="1"/>
</dbReference>